<dbReference type="EMBL" id="CP002433">
    <property type="protein sequence ID" value="ADU70787.1"/>
    <property type="molecule type" value="Genomic_DNA"/>
</dbReference>
<dbReference type="RefSeq" id="WP_013510638.1">
    <property type="nucleotide sequence ID" value="NC_014837.1"/>
</dbReference>
<dbReference type="SMR" id="E6WE99"/>
<dbReference type="STRING" id="592316.Pat9b_3497"/>
<dbReference type="KEGG" id="pao:Pat9b_3497"/>
<dbReference type="eggNOG" id="ENOG503386H">
    <property type="taxonomic scope" value="Bacteria"/>
</dbReference>
<dbReference type="HOGENOM" id="CLU_153761_1_0_6"/>
<dbReference type="OrthoDB" id="6414235at2"/>
<dbReference type="Proteomes" id="UP000001624">
    <property type="component" value="Chromosome"/>
</dbReference>
<dbReference type="GO" id="GO:0005886">
    <property type="term" value="C:plasma membrane"/>
    <property type="evidence" value="ECO:0007669"/>
    <property type="project" value="UniProtKB-SubCell"/>
</dbReference>
<dbReference type="GO" id="GO:0019901">
    <property type="term" value="F:protein kinase binding"/>
    <property type="evidence" value="ECO:0007669"/>
    <property type="project" value="UniProtKB-UniRule"/>
</dbReference>
<dbReference type="Gene3D" id="3.30.70.260">
    <property type="match status" value="1"/>
</dbReference>
<dbReference type="HAMAP" id="MF_00904">
    <property type="entry name" value="Modulator_MzrA"/>
    <property type="match status" value="1"/>
</dbReference>
<dbReference type="InterPro" id="IPR026574">
    <property type="entry name" value="Modulator_MzrA"/>
</dbReference>
<dbReference type="InterPro" id="IPR027398">
    <property type="entry name" value="SecD-TM"/>
</dbReference>
<dbReference type="NCBIfam" id="NF007915">
    <property type="entry name" value="PRK10629.1"/>
    <property type="match status" value="1"/>
</dbReference>
<dbReference type="Pfam" id="PF13721">
    <property type="entry name" value="SecD-TM1"/>
    <property type="match status" value="1"/>
</dbReference>
<evidence type="ECO:0000255" key="1">
    <source>
        <dbReference type="HAMAP-Rule" id="MF_00904"/>
    </source>
</evidence>
<reference key="1">
    <citation type="submission" date="2010-12" db="EMBL/GenBank/DDBJ databases">
        <title>Complete sequence chromosome of Pantoea sp. At-9b.</title>
        <authorList>
            <consortium name="US DOE Joint Genome Institute"/>
            <person name="Lucas S."/>
            <person name="Copeland A."/>
            <person name="Lapidus A."/>
            <person name="Cheng J.-F."/>
            <person name="Goodwin L."/>
            <person name="Pitluck S."/>
            <person name="Davenport K."/>
            <person name="Detter J.C."/>
            <person name="Han C."/>
            <person name="Tapia R."/>
            <person name="Land M."/>
            <person name="Hauser L."/>
            <person name="Kyrpides N."/>
            <person name="Ivanova N."/>
            <person name="Ovchinnikova G."/>
            <person name="Pinto A."/>
            <person name="Currie C."/>
            <person name="Woyke T."/>
        </authorList>
    </citation>
    <scope>NUCLEOTIDE SEQUENCE [LARGE SCALE GENOMIC DNA]</scope>
    <source>
        <strain>At-9b</strain>
    </source>
</reference>
<feature type="chain" id="PRO_0000413191" description="Modulator protein MzrA">
    <location>
        <begin position="1"/>
        <end position="122"/>
    </location>
</feature>
<feature type="topological domain" description="Cytoplasmic" evidence="1">
    <location>
        <begin position="1"/>
        <end position="10"/>
    </location>
</feature>
<feature type="transmembrane region" description="Helical" evidence="1">
    <location>
        <begin position="11"/>
        <end position="31"/>
    </location>
</feature>
<feature type="topological domain" description="Periplasmic" evidence="1">
    <location>
        <begin position="32"/>
        <end position="122"/>
    </location>
</feature>
<keyword id="KW-0997">Cell inner membrane</keyword>
<keyword id="KW-1003">Cell membrane</keyword>
<keyword id="KW-0472">Membrane</keyword>
<keyword id="KW-0812">Transmembrane</keyword>
<keyword id="KW-1133">Transmembrane helix</keyword>
<organism>
    <name type="scientific">Pantoea sp. (strain At-9b)</name>
    <dbReference type="NCBI Taxonomy" id="592316"/>
    <lineage>
        <taxon>Bacteria</taxon>
        <taxon>Pseudomonadati</taxon>
        <taxon>Pseudomonadota</taxon>
        <taxon>Gammaproteobacteria</taxon>
        <taxon>Enterobacterales</taxon>
        <taxon>Erwiniaceae</taxon>
        <taxon>Pantoea</taxon>
    </lineage>
</organism>
<proteinExistence type="inferred from homology"/>
<sequence>MKILTRIPRRLLPWLLGGALALVAVSFAPALLSHETVVQIRVANSGTPLPDGFYLYQQLSAQGVRIKSITPSGDALVIHFENEEQSLAAQKVLRRLLPQGFVVAAGHQASQQNQDANRSIYS</sequence>
<name>MZRA_PANSA</name>
<accession>E6WE99</accession>
<comment type="function">
    <text evidence="1">Modulates the activity of the EnvZ/OmpR two-component regulatory system, probably by directly modulating EnvZ enzymatic activity and increasing stability of phosphorylated OmpR.</text>
</comment>
<comment type="subunit">
    <text evidence="1">Interacts with EnvZ.</text>
</comment>
<comment type="subcellular location">
    <subcellularLocation>
        <location evidence="1">Cell inner membrane</location>
        <topology evidence="1">Single-pass membrane protein</topology>
    </subcellularLocation>
</comment>
<comment type="similarity">
    <text evidence="1">Belongs to the MzrA family.</text>
</comment>
<gene>
    <name evidence="1" type="primary">mzrA</name>
    <name type="ordered locus">Pat9b_3497</name>
</gene>
<protein>
    <recommendedName>
        <fullName evidence="1">Modulator protein MzrA</fullName>
    </recommendedName>
</protein>